<reference key="1">
    <citation type="submission" date="2010-12" db="EMBL/GenBank/DDBJ databases">
        <title>Complete sequence of chromosome of Mycobacterium sp. Spyr1.</title>
        <authorList>
            <consortium name="US DOE Joint Genome Institute"/>
            <person name="Lucas S."/>
            <person name="Copeland A."/>
            <person name="Lapidus A."/>
            <person name="Cheng J.-F."/>
            <person name="Bruce D."/>
            <person name="Goodwin L."/>
            <person name="Pitluck S."/>
            <person name="LaButti K."/>
            <person name="Ivanova N.M."/>
            <person name="Mikhailova N.M."/>
            <person name="Land M."/>
            <person name="Hauser L."/>
            <person name="Koukkou A.I."/>
            <person name="Drainas C."/>
            <person name="Kyrpides N."/>
            <person name="Woyke T."/>
        </authorList>
    </citation>
    <scope>NUCLEOTIDE SEQUENCE [LARGE SCALE GENOMIC DNA]</scope>
    <source>
        <strain>DSM 45189 / LMG 24558 / Spyr1</strain>
    </source>
</reference>
<name>MAK_MYCSR</name>
<proteinExistence type="inferred from homology"/>
<accession>E6TMM3</accession>
<gene>
    <name type="primary">mak</name>
    <name type="ordered locus">Mspyr1_51010</name>
</gene>
<sequence>MTLAFGEWIIHRRWYAGRTRELASVEPAAVTALGGGLDHVLLDVAYTDGSTERYQVLVQWESEPVDGYGEAALIGTASGPDGTRVAYDALFNPEAAGRLLSLINRSETIGELTFSREPDVTLPVDAPAKVSGAEQSNTSVIFGKDAMLKVFRRVTPGVNPDIELNRVLARAGNPHVATLLGAFETSSCALGMVTAFAANSAEGWDMATASVHDLFANEVGGDFADESRRLGAAVASVHATLADTLGTSVTQFPIDTVLERLRSATRAAPELAPYAPQIEQRFRRLADQPIRVHRIHGDLHLGQVLRTPESWLLIDFEGEPGQPLEERRRPDSPLRDVAGVLRSFEYAAYQQVVTGGGDPQMADRARSWVDRNVDAFCAGYAAVAGEDPRASGDVLAAYELDKAVYEAAYEARFRPSWLPIPMRSIQRLVS</sequence>
<evidence type="ECO:0000250" key="1"/>
<evidence type="ECO:0000305" key="2"/>
<dbReference type="EC" id="2.7.1.175"/>
<dbReference type="EMBL" id="CP002385">
    <property type="protein sequence ID" value="ADU01629.1"/>
    <property type="molecule type" value="Genomic_DNA"/>
</dbReference>
<dbReference type="RefSeq" id="WP_013473105.1">
    <property type="nucleotide sequence ID" value="NC_014814.1"/>
</dbReference>
<dbReference type="SMR" id="E6TMM3"/>
<dbReference type="KEGG" id="msp:Mspyr1_51010"/>
<dbReference type="HOGENOM" id="CLU_029675_0_0_11"/>
<dbReference type="UniPathway" id="UPA00164"/>
<dbReference type="Proteomes" id="UP000008916">
    <property type="component" value="Chromosome"/>
</dbReference>
<dbReference type="GO" id="GO:0005524">
    <property type="term" value="F:ATP binding"/>
    <property type="evidence" value="ECO:0007669"/>
    <property type="project" value="UniProtKB-KW"/>
</dbReference>
<dbReference type="GO" id="GO:0016301">
    <property type="term" value="F:kinase activity"/>
    <property type="evidence" value="ECO:0007669"/>
    <property type="project" value="UniProtKB-KW"/>
</dbReference>
<dbReference type="GO" id="GO:0046835">
    <property type="term" value="P:carbohydrate phosphorylation"/>
    <property type="evidence" value="ECO:0000250"/>
    <property type="project" value="UniProtKB"/>
</dbReference>
<dbReference type="GO" id="GO:0005978">
    <property type="term" value="P:glycogen biosynthetic process"/>
    <property type="evidence" value="ECO:0007669"/>
    <property type="project" value="UniProtKB-UniPathway"/>
</dbReference>
<dbReference type="GO" id="GO:0005992">
    <property type="term" value="P:trehalose biosynthetic process"/>
    <property type="evidence" value="ECO:0000250"/>
    <property type="project" value="UniProtKB"/>
</dbReference>
<dbReference type="FunFam" id="3.90.1200.10:FF:000010">
    <property type="entry name" value="Maltokinase"/>
    <property type="match status" value="1"/>
</dbReference>
<dbReference type="Gene3D" id="3.90.1200.10">
    <property type="match status" value="1"/>
</dbReference>
<dbReference type="InterPro" id="IPR011009">
    <property type="entry name" value="Kinase-like_dom_sf"/>
</dbReference>
<dbReference type="InterPro" id="IPR040999">
    <property type="entry name" value="Mak_N_cap"/>
</dbReference>
<dbReference type="Pfam" id="PF18085">
    <property type="entry name" value="Mak_N_cap"/>
    <property type="match status" value="1"/>
</dbReference>
<dbReference type="SUPFAM" id="SSF56112">
    <property type="entry name" value="Protein kinase-like (PK-like)"/>
    <property type="match status" value="1"/>
</dbReference>
<organism>
    <name type="scientific">Mycolicibacterium gilvum (strain DSM 45189 / LMG 24558 / Spyr1)</name>
    <name type="common">Mycobacterium gilvum</name>
    <dbReference type="NCBI Taxonomy" id="278137"/>
    <lineage>
        <taxon>Bacteria</taxon>
        <taxon>Bacillati</taxon>
        <taxon>Actinomycetota</taxon>
        <taxon>Actinomycetes</taxon>
        <taxon>Mycobacteriales</taxon>
        <taxon>Mycobacteriaceae</taxon>
        <taxon>Mycolicibacterium</taxon>
    </lineage>
</organism>
<keyword id="KW-0067">ATP-binding</keyword>
<keyword id="KW-0119">Carbohydrate metabolism</keyword>
<keyword id="KW-0320">Glycogen biosynthesis</keyword>
<keyword id="KW-0321">Glycogen metabolism</keyword>
<keyword id="KW-0418">Kinase</keyword>
<keyword id="KW-0547">Nucleotide-binding</keyword>
<keyword id="KW-0808">Transferase</keyword>
<comment type="function">
    <text evidence="1">Catalyzes the ATP-dependent phosphorylation of maltose to maltose 1-phosphate. Is involved in a branched alpha-glucan biosynthetic pathway from trehalose, together with TreS, GlgE and GlgB (By similarity).</text>
</comment>
<comment type="catalytic activity">
    <reaction>
        <text>D-maltose + ATP = alpha-maltose 1-phosphate + ADP + H(+)</text>
        <dbReference type="Rhea" id="RHEA:31915"/>
        <dbReference type="ChEBI" id="CHEBI:15378"/>
        <dbReference type="ChEBI" id="CHEBI:17306"/>
        <dbReference type="ChEBI" id="CHEBI:30616"/>
        <dbReference type="ChEBI" id="CHEBI:63576"/>
        <dbReference type="ChEBI" id="CHEBI:456216"/>
        <dbReference type="EC" id="2.7.1.175"/>
    </reaction>
</comment>
<comment type="pathway">
    <text>Glycan biosynthesis; glycogen biosynthesis.</text>
</comment>
<comment type="subunit">
    <text evidence="1">Monomer.</text>
</comment>
<comment type="similarity">
    <text evidence="2">Belongs to the aminoglycoside phosphotransferase family.</text>
</comment>
<protein>
    <recommendedName>
        <fullName>Maltokinase</fullName>
        <shortName>MaK</shortName>
        <ecNumber>2.7.1.175</ecNumber>
    </recommendedName>
    <alternativeName>
        <fullName>Maltose-1-phosphate synthase</fullName>
    </alternativeName>
</protein>
<feature type="chain" id="PRO_0000412893" description="Maltokinase">
    <location>
        <begin position="1"/>
        <end position="430"/>
    </location>
</feature>